<feature type="chain" id="PRO_1000031201" description="Ribonuclease HII">
    <location>
        <begin position="1"/>
        <end position="209"/>
    </location>
</feature>
<feature type="domain" description="RNase H type-2" evidence="2">
    <location>
        <begin position="18"/>
        <end position="209"/>
    </location>
</feature>
<feature type="binding site" evidence="1">
    <location>
        <position position="24"/>
    </location>
    <ligand>
        <name>a divalent metal cation</name>
        <dbReference type="ChEBI" id="CHEBI:60240"/>
    </ligand>
</feature>
<feature type="binding site" evidence="1">
    <location>
        <position position="25"/>
    </location>
    <ligand>
        <name>a divalent metal cation</name>
        <dbReference type="ChEBI" id="CHEBI:60240"/>
    </ligand>
</feature>
<feature type="binding site" evidence="1">
    <location>
        <position position="116"/>
    </location>
    <ligand>
        <name>a divalent metal cation</name>
        <dbReference type="ChEBI" id="CHEBI:60240"/>
    </ligand>
</feature>
<accession>A4Y557</accession>
<keyword id="KW-0963">Cytoplasm</keyword>
<keyword id="KW-0255">Endonuclease</keyword>
<keyword id="KW-0378">Hydrolase</keyword>
<keyword id="KW-0464">Manganese</keyword>
<keyword id="KW-0479">Metal-binding</keyword>
<keyword id="KW-0540">Nuclease</keyword>
<protein>
    <recommendedName>
        <fullName evidence="1">Ribonuclease HII</fullName>
        <shortName evidence="1">RNase HII</shortName>
        <ecNumber evidence="1">3.1.26.4</ecNumber>
    </recommendedName>
</protein>
<comment type="function">
    <text evidence="1">Endonuclease that specifically degrades the RNA of RNA-DNA hybrids.</text>
</comment>
<comment type="catalytic activity">
    <reaction evidence="1">
        <text>Endonucleolytic cleavage to 5'-phosphomonoester.</text>
        <dbReference type="EC" id="3.1.26.4"/>
    </reaction>
</comment>
<comment type="cofactor">
    <cofactor evidence="1">
        <name>Mn(2+)</name>
        <dbReference type="ChEBI" id="CHEBI:29035"/>
    </cofactor>
    <cofactor evidence="1">
        <name>Mg(2+)</name>
        <dbReference type="ChEBI" id="CHEBI:18420"/>
    </cofactor>
    <text evidence="1">Manganese or magnesium. Binds 1 divalent metal ion per monomer in the absence of substrate. May bind a second metal ion after substrate binding.</text>
</comment>
<comment type="subcellular location">
    <subcellularLocation>
        <location evidence="1">Cytoplasm</location>
    </subcellularLocation>
</comment>
<comment type="similarity">
    <text evidence="1">Belongs to the RNase HII family.</text>
</comment>
<evidence type="ECO:0000255" key="1">
    <source>
        <dbReference type="HAMAP-Rule" id="MF_00052"/>
    </source>
</evidence>
<evidence type="ECO:0000255" key="2">
    <source>
        <dbReference type="PROSITE-ProRule" id="PRU01319"/>
    </source>
</evidence>
<proteinExistence type="inferred from homology"/>
<organism>
    <name type="scientific">Shewanella putrefaciens (strain CN-32 / ATCC BAA-453)</name>
    <dbReference type="NCBI Taxonomy" id="319224"/>
    <lineage>
        <taxon>Bacteria</taxon>
        <taxon>Pseudomonadati</taxon>
        <taxon>Pseudomonadota</taxon>
        <taxon>Gammaproteobacteria</taxon>
        <taxon>Alteromonadales</taxon>
        <taxon>Shewanellaceae</taxon>
        <taxon>Shewanella</taxon>
    </lineage>
</organism>
<gene>
    <name evidence="1" type="primary">rnhB</name>
    <name type="ordered locus">Sputcn32_1362</name>
</gene>
<reference key="1">
    <citation type="submission" date="2007-04" db="EMBL/GenBank/DDBJ databases">
        <title>Complete sequence of Shewanella putrefaciens CN-32.</title>
        <authorList>
            <consortium name="US DOE Joint Genome Institute"/>
            <person name="Copeland A."/>
            <person name="Lucas S."/>
            <person name="Lapidus A."/>
            <person name="Barry K."/>
            <person name="Detter J.C."/>
            <person name="Glavina del Rio T."/>
            <person name="Hammon N."/>
            <person name="Israni S."/>
            <person name="Dalin E."/>
            <person name="Tice H."/>
            <person name="Pitluck S."/>
            <person name="Chain P."/>
            <person name="Malfatti S."/>
            <person name="Shin M."/>
            <person name="Vergez L."/>
            <person name="Schmutz J."/>
            <person name="Larimer F."/>
            <person name="Land M."/>
            <person name="Hauser L."/>
            <person name="Kyrpides N."/>
            <person name="Mikhailova N."/>
            <person name="Romine M.F."/>
            <person name="Fredrickson J."/>
            <person name="Tiedje J."/>
            <person name="Richardson P."/>
        </authorList>
    </citation>
    <scope>NUCLEOTIDE SEQUENCE [LARGE SCALE GENOMIC DNA]</scope>
    <source>
        <strain>CN-32 / ATCC BAA-453</strain>
    </source>
</reference>
<dbReference type="EC" id="3.1.26.4" evidence="1"/>
<dbReference type="EMBL" id="CP000681">
    <property type="protein sequence ID" value="ABP75090.1"/>
    <property type="molecule type" value="Genomic_DNA"/>
</dbReference>
<dbReference type="SMR" id="A4Y557"/>
<dbReference type="STRING" id="319224.Sputcn32_1362"/>
<dbReference type="KEGG" id="spc:Sputcn32_1362"/>
<dbReference type="eggNOG" id="COG0164">
    <property type="taxonomic scope" value="Bacteria"/>
</dbReference>
<dbReference type="HOGENOM" id="CLU_036532_3_2_6"/>
<dbReference type="GO" id="GO:0005737">
    <property type="term" value="C:cytoplasm"/>
    <property type="evidence" value="ECO:0007669"/>
    <property type="project" value="UniProtKB-SubCell"/>
</dbReference>
<dbReference type="GO" id="GO:0032299">
    <property type="term" value="C:ribonuclease H2 complex"/>
    <property type="evidence" value="ECO:0007669"/>
    <property type="project" value="TreeGrafter"/>
</dbReference>
<dbReference type="GO" id="GO:0030145">
    <property type="term" value="F:manganese ion binding"/>
    <property type="evidence" value="ECO:0007669"/>
    <property type="project" value="UniProtKB-UniRule"/>
</dbReference>
<dbReference type="GO" id="GO:0003723">
    <property type="term" value="F:RNA binding"/>
    <property type="evidence" value="ECO:0007669"/>
    <property type="project" value="InterPro"/>
</dbReference>
<dbReference type="GO" id="GO:0004523">
    <property type="term" value="F:RNA-DNA hybrid ribonuclease activity"/>
    <property type="evidence" value="ECO:0007669"/>
    <property type="project" value="UniProtKB-UniRule"/>
</dbReference>
<dbReference type="GO" id="GO:0043137">
    <property type="term" value="P:DNA replication, removal of RNA primer"/>
    <property type="evidence" value="ECO:0007669"/>
    <property type="project" value="TreeGrafter"/>
</dbReference>
<dbReference type="GO" id="GO:0006298">
    <property type="term" value="P:mismatch repair"/>
    <property type="evidence" value="ECO:0007669"/>
    <property type="project" value="TreeGrafter"/>
</dbReference>
<dbReference type="CDD" id="cd07182">
    <property type="entry name" value="RNase_HII_bacteria_HII_like"/>
    <property type="match status" value="1"/>
</dbReference>
<dbReference type="FunFam" id="3.30.420.10:FF:000006">
    <property type="entry name" value="Ribonuclease HII"/>
    <property type="match status" value="1"/>
</dbReference>
<dbReference type="Gene3D" id="3.30.420.10">
    <property type="entry name" value="Ribonuclease H-like superfamily/Ribonuclease H"/>
    <property type="match status" value="1"/>
</dbReference>
<dbReference type="HAMAP" id="MF_00052_B">
    <property type="entry name" value="RNase_HII_B"/>
    <property type="match status" value="1"/>
</dbReference>
<dbReference type="InterPro" id="IPR022898">
    <property type="entry name" value="RNase_HII"/>
</dbReference>
<dbReference type="InterPro" id="IPR001352">
    <property type="entry name" value="RNase_HII/HIII"/>
</dbReference>
<dbReference type="InterPro" id="IPR024567">
    <property type="entry name" value="RNase_HII/HIII_dom"/>
</dbReference>
<dbReference type="InterPro" id="IPR012337">
    <property type="entry name" value="RNaseH-like_sf"/>
</dbReference>
<dbReference type="InterPro" id="IPR036397">
    <property type="entry name" value="RNaseH_sf"/>
</dbReference>
<dbReference type="NCBIfam" id="NF000594">
    <property type="entry name" value="PRK00015.1-1"/>
    <property type="match status" value="1"/>
</dbReference>
<dbReference type="NCBIfam" id="NF000595">
    <property type="entry name" value="PRK00015.1-3"/>
    <property type="match status" value="1"/>
</dbReference>
<dbReference type="NCBIfam" id="NF000596">
    <property type="entry name" value="PRK00015.1-4"/>
    <property type="match status" value="1"/>
</dbReference>
<dbReference type="PANTHER" id="PTHR10954">
    <property type="entry name" value="RIBONUCLEASE H2 SUBUNIT A"/>
    <property type="match status" value="1"/>
</dbReference>
<dbReference type="PANTHER" id="PTHR10954:SF18">
    <property type="entry name" value="RIBONUCLEASE HII"/>
    <property type="match status" value="1"/>
</dbReference>
<dbReference type="Pfam" id="PF01351">
    <property type="entry name" value="RNase_HII"/>
    <property type="match status" value="1"/>
</dbReference>
<dbReference type="SUPFAM" id="SSF53098">
    <property type="entry name" value="Ribonuclease H-like"/>
    <property type="match status" value="1"/>
</dbReference>
<dbReference type="PROSITE" id="PS51975">
    <property type="entry name" value="RNASE_H_2"/>
    <property type="match status" value="1"/>
</dbReference>
<sequence>MAVFKVLTPADIVAFSTGLIAGVDEVGRGPLVGDVVTAAVILDPNQPISGLNDSKKLSEKRREALFDEICEKALCYHIGRASPAEIDELNILHATMLAMQRAVAGLNLAPKLVLVDGNRSPFFSHNSQSIVSHSIIKGDGLIASISAASIIAKVTRDREMDALDAAYPQYGFAKHKGYPTKAHFEAIAEHGVFDQYRKSFKPVKALLEG</sequence>
<name>RNH2_SHEPC</name>